<proteinExistence type="evidence at protein level"/>
<dbReference type="EMBL" id="AF132496">
    <property type="protein sequence ID" value="AAF22145.2"/>
    <property type="molecule type" value="mRNA"/>
</dbReference>
<dbReference type="RefSeq" id="NP_999275.1">
    <property type="nucleotide sequence ID" value="NM_214110.1"/>
</dbReference>
<dbReference type="RefSeq" id="XP_013838830.1">
    <property type="nucleotide sequence ID" value="XM_013983376.2"/>
</dbReference>
<dbReference type="PDB" id="4DN8">
    <property type="method" value="X-ray"/>
    <property type="resolution" value="2.20 A"/>
    <property type="chains" value="A=223-378"/>
</dbReference>
<dbReference type="PDB" id="6BBD">
    <property type="method" value="X-ray"/>
    <property type="resolution" value="1.90 A"/>
    <property type="chains" value="A=225-378"/>
</dbReference>
<dbReference type="PDB" id="6BBE">
    <property type="method" value="X-ray"/>
    <property type="resolution" value="1.90 A"/>
    <property type="chains" value="A=223-378"/>
</dbReference>
<dbReference type="PDBsum" id="4DN8"/>
<dbReference type="PDBsum" id="6BBD"/>
<dbReference type="PDBsum" id="6BBE"/>
<dbReference type="SMR" id="Q9N1X4"/>
<dbReference type="FunCoup" id="Q9N1X4">
    <property type="interactions" value="301"/>
</dbReference>
<dbReference type="STRING" id="9823.ENSSSCP00000058499"/>
<dbReference type="UniLectin" id="Q9N1X4"/>
<dbReference type="GlyCosmos" id="Q9N1X4">
    <property type="glycosylation" value="2 sites, No reported glycans"/>
</dbReference>
<dbReference type="GlyGen" id="Q9N1X4">
    <property type="glycosylation" value="3 sites"/>
</dbReference>
<dbReference type="PaxDb" id="9823-ENSSSCP00000011020"/>
<dbReference type="PeptideAtlas" id="Q9N1X4"/>
<dbReference type="Ensembl" id="ENSSSCT00030028687.1">
    <property type="protein sequence ID" value="ENSSSCP00030012809.1"/>
    <property type="gene ID" value="ENSSSCG00030020739.1"/>
</dbReference>
<dbReference type="Ensembl" id="ENSSSCT00040049871.1">
    <property type="protein sequence ID" value="ENSSSCP00040020708.1"/>
    <property type="gene ID" value="ENSSSCG00040037098.1"/>
</dbReference>
<dbReference type="Ensembl" id="ENSSSCT00050068407.1">
    <property type="protein sequence ID" value="ENSSSCP00050029347.1"/>
    <property type="gene ID" value="ENSSSCG00050050252.1"/>
</dbReference>
<dbReference type="Ensembl" id="ENSSSCT00065023689.1">
    <property type="protein sequence ID" value="ENSSSCP00065009643.1"/>
    <property type="gene ID" value="ENSSSCG00065017815.1"/>
</dbReference>
<dbReference type="Ensembl" id="ENSSSCT00070002361.1">
    <property type="protein sequence ID" value="ENSSSCP00070001974.1"/>
    <property type="gene ID" value="ENSSSCG00070001221.1"/>
</dbReference>
<dbReference type="Ensembl" id="ENSSSCT00115008159">
    <property type="protein sequence ID" value="ENSSSCP00115007647"/>
    <property type="gene ID" value="ENSSSCG00115004761"/>
</dbReference>
<dbReference type="Ensembl" id="ENSSSCT00130019064">
    <property type="protein sequence ID" value="ENSSSCP00130012912"/>
    <property type="gene ID" value="ENSSSCG00130010177"/>
</dbReference>
<dbReference type="GeneID" id="397198"/>
<dbReference type="KEGG" id="ssc:397198"/>
<dbReference type="CTD" id="6441"/>
<dbReference type="eggNOG" id="KOG4297">
    <property type="taxonomic scope" value="Eukaryota"/>
</dbReference>
<dbReference type="HOGENOM" id="CLU_049894_3_0_1"/>
<dbReference type="InParanoid" id="Q9N1X4"/>
<dbReference type="OMA" id="YQKVATF"/>
<dbReference type="OrthoDB" id="10255512at2759"/>
<dbReference type="TreeFam" id="TF330481"/>
<dbReference type="Reactome" id="R-SSC-166016">
    <property type="pathway name" value="Toll Like Receptor 4 (TLR4) Cascade"/>
</dbReference>
<dbReference type="Reactome" id="R-SSC-198933">
    <property type="pathway name" value="Immunoregulatory interactions between a Lymphoid and a non-Lymphoid cell"/>
</dbReference>
<dbReference type="Reactome" id="R-SSC-391160">
    <property type="pathway name" value="Signal regulatory protein family interactions"/>
</dbReference>
<dbReference type="Reactome" id="R-SSC-5683826">
    <property type="pathway name" value="Surfactant metabolism"/>
</dbReference>
<dbReference type="Reactome" id="R-SSC-5686938">
    <property type="pathway name" value="Regulation of TLR by endogenous ligand"/>
</dbReference>
<dbReference type="EvolutionaryTrace" id="Q9N1X4"/>
<dbReference type="Proteomes" id="UP000008227">
    <property type="component" value="Unplaced"/>
</dbReference>
<dbReference type="Proteomes" id="UP000314985">
    <property type="component" value="Chromosome 14"/>
</dbReference>
<dbReference type="Proteomes" id="UP000694570">
    <property type="component" value="Unplaced"/>
</dbReference>
<dbReference type="Proteomes" id="UP000694571">
    <property type="component" value="Unplaced"/>
</dbReference>
<dbReference type="Proteomes" id="UP000694720">
    <property type="component" value="Unplaced"/>
</dbReference>
<dbReference type="Proteomes" id="UP000694722">
    <property type="component" value="Unplaced"/>
</dbReference>
<dbReference type="Proteomes" id="UP000694723">
    <property type="component" value="Unplaced"/>
</dbReference>
<dbReference type="Proteomes" id="UP000694724">
    <property type="component" value="Unplaced"/>
</dbReference>
<dbReference type="Proteomes" id="UP000694725">
    <property type="component" value="Unplaced"/>
</dbReference>
<dbReference type="Proteomes" id="UP000694726">
    <property type="component" value="Unplaced"/>
</dbReference>
<dbReference type="Proteomes" id="UP000694727">
    <property type="component" value="Unplaced"/>
</dbReference>
<dbReference type="Proteomes" id="UP000694728">
    <property type="component" value="Unplaced"/>
</dbReference>
<dbReference type="GO" id="GO:0005581">
    <property type="term" value="C:collagen trimer"/>
    <property type="evidence" value="ECO:0007669"/>
    <property type="project" value="UniProtKB-KW"/>
</dbReference>
<dbReference type="GO" id="GO:0005615">
    <property type="term" value="C:extracellular space"/>
    <property type="evidence" value="ECO:0000318"/>
    <property type="project" value="GO_Central"/>
</dbReference>
<dbReference type="GO" id="GO:0005771">
    <property type="term" value="C:multivesicular body"/>
    <property type="evidence" value="ECO:0000318"/>
    <property type="project" value="GO_Central"/>
</dbReference>
<dbReference type="GO" id="GO:0030246">
    <property type="term" value="F:carbohydrate binding"/>
    <property type="evidence" value="ECO:0007669"/>
    <property type="project" value="UniProtKB-KW"/>
</dbReference>
<dbReference type="GO" id="GO:0045087">
    <property type="term" value="P:innate immune response"/>
    <property type="evidence" value="ECO:0007669"/>
    <property type="project" value="UniProtKB-KW"/>
</dbReference>
<dbReference type="GO" id="GO:0048286">
    <property type="term" value="P:lung alveolus development"/>
    <property type="evidence" value="ECO:0000250"/>
    <property type="project" value="UniProtKB"/>
</dbReference>
<dbReference type="GO" id="GO:0050766">
    <property type="term" value="P:positive regulation of phagocytosis"/>
    <property type="evidence" value="ECO:0000318"/>
    <property type="project" value="GO_Central"/>
</dbReference>
<dbReference type="GO" id="GO:0007585">
    <property type="term" value="P:respiratory gaseous exchange by respiratory system"/>
    <property type="evidence" value="ECO:0007669"/>
    <property type="project" value="UniProtKB-KW"/>
</dbReference>
<dbReference type="GO" id="GO:0043129">
    <property type="term" value="P:surfactant homeostasis"/>
    <property type="evidence" value="ECO:0000250"/>
    <property type="project" value="UniProtKB"/>
</dbReference>
<dbReference type="FunFam" id="1.20.5.360:FF:000001">
    <property type="entry name" value="Pulmonary surfactant-associated protein D"/>
    <property type="match status" value="1"/>
</dbReference>
<dbReference type="FunFam" id="3.10.100.10:FF:000045">
    <property type="entry name" value="Pulmonary surfactant-associated protein D"/>
    <property type="match status" value="1"/>
</dbReference>
<dbReference type="Gene3D" id="3.10.100.10">
    <property type="entry name" value="Mannose-Binding Protein A, subunit A"/>
    <property type="match status" value="1"/>
</dbReference>
<dbReference type="Gene3D" id="1.20.5.360">
    <property type="entry name" value="SFTPD helical domain"/>
    <property type="match status" value="1"/>
</dbReference>
<dbReference type="InterPro" id="IPR001304">
    <property type="entry name" value="C-type_lectin-like"/>
</dbReference>
<dbReference type="InterPro" id="IPR016186">
    <property type="entry name" value="C-type_lectin-like/link_sf"/>
</dbReference>
<dbReference type="InterPro" id="IPR018378">
    <property type="entry name" value="C-type_lectin_CS"/>
</dbReference>
<dbReference type="InterPro" id="IPR051077">
    <property type="entry name" value="Ca-dependent_lectin"/>
</dbReference>
<dbReference type="InterPro" id="IPR008160">
    <property type="entry name" value="Collagen"/>
</dbReference>
<dbReference type="InterPro" id="IPR016187">
    <property type="entry name" value="CTDL_fold"/>
</dbReference>
<dbReference type="InterPro" id="IPR015097">
    <property type="entry name" value="Surfac_D-trimer"/>
</dbReference>
<dbReference type="PANTHER" id="PTHR24024">
    <property type="entry name" value="PULMONARY SURFACTANT-ASSOCIATED PROTEIN A"/>
    <property type="match status" value="1"/>
</dbReference>
<dbReference type="PANTHER" id="PTHR24024:SF15">
    <property type="entry name" value="PULMONARY SURFACTANT-ASSOCIATED PROTEIN D"/>
    <property type="match status" value="1"/>
</dbReference>
<dbReference type="Pfam" id="PF01391">
    <property type="entry name" value="Collagen"/>
    <property type="match status" value="2"/>
</dbReference>
<dbReference type="Pfam" id="PF00059">
    <property type="entry name" value="Lectin_C"/>
    <property type="match status" value="1"/>
</dbReference>
<dbReference type="Pfam" id="PF09006">
    <property type="entry name" value="Surfac_D-trimer"/>
    <property type="match status" value="1"/>
</dbReference>
<dbReference type="SMART" id="SM00034">
    <property type="entry name" value="CLECT"/>
    <property type="match status" value="1"/>
</dbReference>
<dbReference type="SUPFAM" id="SSF56436">
    <property type="entry name" value="C-type lectin-like"/>
    <property type="match status" value="1"/>
</dbReference>
<dbReference type="SUPFAM" id="SSF57944">
    <property type="entry name" value="Triple coiled coil domain of C-type lectins"/>
    <property type="match status" value="1"/>
</dbReference>
<dbReference type="PROSITE" id="PS00615">
    <property type="entry name" value="C_TYPE_LECTIN_1"/>
    <property type="match status" value="1"/>
</dbReference>
<dbReference type="PROSITE" id="PS50041">
    <property type="entry name" value="C_TYPE_LECTIN_2"/>
    <property type="match status" value="1"/>
</dbReference>
<comment type="function">
    <text evidence="1">Contributes to the lung's defense against inhaled microorganisms, organic antigens and toxins. Interacts with compounds such as bacterial lipopolysaccharides, oligosaccharides and fatty acids and modulates leukocyte action in immune response. May participate in the extracellular reorganization or turnover of pulmonary surfactant. Binds strongly maltose residues and to a lesser extent other alpha-glucosyl moieties (By similarity).</text>
</comment>
<comment type="subunit">
    <text evidence="1">Oligomeric complex of 4 set of homotrimers.</text>
</comment>
<comment type="subcellular location">
    <subcellularLocation>
        <location evidence="1">Secreted</location>
        <location evidence="1">Extracellular space</location>
        <location evidence="1">Extracellular matrix</location>
    </subcellularLocation>
    <subcellularLocation>
        <location evidence="1">Secreted</location>
        <location evidence="1">Extracellular space</location>
        <location evidence="1">Surface film</location>
    </subcellularLocation>
</comment>
<comment type="PTM">
    <text evidence="1">Hydroxylation on proline residues within the sequence motif, GXPG, is most likely to be 4-hydroxy as this fits the requirement for 4-hydroxylation in vertebrates.</text>
</comment>
<comment type="PTM">
    <text evidence="1">S-nitrosylation at Cys-35 and Cys-40 alters the quaternary structure which results in a pro-inflammatory chemoattractive signaling activity with macrophages.</text>
</comment>
<comment type="miscellaneous">
    <text>Pulmonary surfactant consists of 90% lipid and 10% protein. There are 4 surfactant-associated proteins: 2 collagenous, carbohydrate-binding glycoproteins (SP-A and SP-D) and 2 small hydrophobic proteins (SP-B and SP-C).</text>
</comment>
<comment type="similarity">
    <text evidence="6">Belongs to the SFTPD family.</text>
</comment>
<accession>Q9N1X4</accession>
<protein>
    <recommendedName>
        <fullName>Pulmonary surfactant-associated protein D</fullName>
        <shortName>PSP-D</shortName>
        <shortName>SP-D</shortName>
    </recommendedName>
    <alternativeName>
        <fullName>Lung surfactant protein D</fullName>
    </alternativeName>
</protein>
<reference key="1">
    <citation type="journal article" date="2000" name="J. Immunol.">
        <title>Porcine lung surfactant protein D: complementary DNA cloning, chromosomal localization, and tissue distribution.</title>
        <authorList>
            <person name="van Eijk M."/>
            <person name="Haagsman H.P."/>
            <person name="Skinner T."/>
            <person name="Archibald A.L."/>
            <person name="Reid K.B.M."/>
            <person name="Lawson P.R."/>
        </authorList>
    </citation>
    <scope>NUCLEOTIDE SEQUENCE [MRNA]</scope>
</reference>
<sequence>MLLLPLSVLILLTQPPRSLGAEMKTYSQRAVANACALVMCSPMENGLPGRDGRDGREGPRGEKGDPGLPGAVGRAGMPGLAGPVGPKGDNGSTGEPGAKGDIGPCGPPGPPGIPGPAGKEGPSGQQGNIGPPGTPGPKGETGPKGEVGALGMQGSTGARGPAGLKGERGAPGERGAPGSAGAAGPAGATGPQGPSGARGPPGLKGDRGPPGERGAKGESGLPGITALRQQVETLQGQVQRLQKAFSQYKKVELFPNGRGVGEKIFKTGGFEKTFQDAQQVCTQAGGQMASPRSETENEALSQLVTAQNKAAFLSMTDIKTEGNFTYPTGEPLVYANWAPGEPNNNGGSSGAENCVEIFPNGKWNDKACGELRLVICEF</sequence>
<name>SFTPD_PIG</name>
<gene>
    <name type="primary">SFTPD</name>
</gene>
<organism>
    <name type="scientific">Sus scrofa</name>
    <name type="common">Pig</name>
    <dbReference type="NCBI Taxonomy" id="9823"/>
    <lineage>
        <taxon>Eukaryota</taxon>
        <taxon>Metazoa</taxon>
        <taxon>Chordata</taxon>
        <taxon>Craniata</taxon>
        <taxon>Vertebrata</taxon>
        <taxon>Euteleostomi</taxon>
        <taxon>Mammalia</taxon>
        <taxon>Eutheria</taxon>
        <taxon>Laurasiatheria</taxon>
        <taxon>Artiodactyla</taxon>
        <taxon>Suina</taxon>
        <taxon>Suidae</taxon>
        <taxon>Sus</taxon>
    </lineage>
</organism>
<evidence type="ECO:0000250" key="1"/>
<evidence type="ECO:0000250" key="2">
    <source>
        <dbReference type="UniProtKB" id="P35248"/>
    </source>
</evidence>
<evidence type="ECO:0000255" key="3"/>
<evidence type="ECO:0000255" key="4">
    <source>
        <dbReference type="PROSITE-ProRule" id="PRU00040"/>
    </source>
</evidence>
<evidence type="ECO:0000256" key="5">
    <source>
        <dbReference type="SAM" id="MobiDB-lite"/>
    </source>
</evidence>
<evidence type="ECO:0000305" key="6"/>
<evidence type="ECO:0007829" key="7">
    <source>
        <dbReference type="PDB" id="4DN8"/>
    </source>
</evidence>
<evidence type="ECO:0007829" key="8">
    <source>
        <dbReference type="PDB" id="6BBD"/>
    </source>
</evidence>
<feature type="signal peptide" evidence="3">
    <location>
        <begin position="1"/>
        <end position="20"/>
    </location>
</feature>
<feature type="chain" id="PRO_5000056060" description="Pulmonary surfactant-associated protein D">
    <location>
        <begin position="21"/>
        <end position="378"/>
    </location>
</feature>
<feature type="domain" description="Collagen-like">
    <location>
        <begin position="46"/>
        <end position="222"/>
    </location>
</feature>
<feature type="domain" description="C-type lectin" evidence="4">
    <location>
        <begin position="260"/>
        <end position="378"/>
    </location>
</feature>
<feature type="region of interest" description="Disordered" evidence="5">
    <location>
        <begin position="43"/>
        <end position="221"/>
    </location>
</feature>
<feature type="coiled-coil region" evidence="3">
    <location>
        <begin position="223"/>
        <end position="254"/>
    </location>
</feature>
<feature type="compositionally biased region" description="Basic and acidic residues" evidence="5">
    <location>
        <begin position="50"/>
        <end position="65"/>
    </location>
</feature>
<feature type="compositionally biased region" description="Pro residues" evidence="5">
    <location>
        <begin position="105"/>
        <end position="114"/>
    </location>
</feature>
<feature type="compositionally biased region" description="Low complexity" evidence="5">
    <location>
        <begin position="137"/>
        <end position="146"/>
    </location>
</feature>
<feature type="compositionally biased region" description="Low complexity" evidence="5">
    <location>
        <begin position="173"/>
        <end position="197"/>
    </location>
</feature>
<feature type="compositionally biased region" description="Basic and acidic residues" evidence="5">
    <location>
        <begin position="204"/>
        <end position="216"/>
    </location>
</feature>
<feature type="modified residue" description="S-nitrosocysteine" evidence="2">
    <location>
        <position position="35"/>
    </location>
</feature>
<feature type="modified residue" description="S-nitrosocysteine" evidence="2">
    <location>
        <position position="40"/>
    </location>
</feature>
<feature type="modified residue" description="4-hydroxyproline" evidence="1">
    <location>
        <position position="78"/>
    </location>
</feature>
<feature type="modified residue" description="5-hydroxylysine" evidence="1">
    <location>
        <position position="87"/>
    </location>
</feature>
<feature type="modified residue" description="4-hydroxyproline" evidence="1">
    <location>
        <position position="96"/>
    </location>
</feature>
<feature type="modified residue" description="5-hydroxylysine" evidence="1">
    <location>
        <position position="99"/>
    </location>
</feature>
<feature type="modified residue" description="4-hydroxyproline" evidence="1">
    <location>
        <position position="171"/>
    </location>
</feature>
<feature type="modified residue" description="4-hydroxyproline" evidence="1">
    <location>
        <position position="177"/>
    </location>
</feature>
<feature type="glycosylation site" description="N-linked (GlcNAc...) asparagine" evidence="3">
    <location>
        <position position="90"/>
    </location>
</feature>
<feature type="glycosylation site" description="N-linked (GlcNAc...) asparagine" evidence="3">
    <location>
        <position position="323"/>
    </location>
</feature>
<feature type="disulfide bond" evidence="4">
    <location>
        <begin position="281"/>
        <end position="376"/>
    </location>
</feature>
<feature type="disulfide bond" evidence="4">
    <location>
        <begin position="354"/>
        <end position="368"/>
    </location>
</feature>
<feature type="helix" evidence="8">
    <location>
        <begin position="226"/>
        <end position="253"/>
    </location>
</feature>
<feature type="turn" evidence="8">
    <location>
        <begin position="254"/>
        <end position="256"/>
    </location>
</feature>
<feature type="strand" evidence="8">
    <location>
        <begin position="257"/>
        <end position="260"/>
    </location>
</feature>
<feature type="strand" evidence="8">
    <location>
        <begin position="263"/>
        <end position="272"/>
    </location>
</feature>
<feature type="helix" evidence="8">
    <location>
        <begin position="274"/>
        <end position="283"/>
    </location>
</feature>
<feature type="strand" evidence="8">
    <location>
        <begin position="286"/>
        <end position="288"/>
    </location>
</feature>
<feature type="helix" evidence="8">
    <location>
        <begin position="294"/>
        <end position="307"/>
    </location>
</feature>
<feature type="strand" evidence="7">
    <location>
        <begin position="311"/>
        <end position="316"/>
    </location>
</feature>
<feature type="strand" evidence="8">
    <location>
        <begin position="318"/>
        <end position="320"/>
    </location>
</feature>
<feature type="helix" evidence="8">
    <location>
        <begin position="347"/>
        <end position="349"/>
    </location>
</feature>
<feature type="strand" evidence="8">
    <location>
        <begin position="354"/>
        <end position="357"/>
    </location>
</feature>
<feature type="strand" evidence="8">
    <location>
        <begin position="363"/>
        <end position="366"/>
    </location>
</feature>
<feature type="strand" evidence="8">
    <location>
        <begin position="372"/>
        <end position="378"/>
    </location>
</feature>
<keyword id="KW-0002">3D-structure</keyword>
<keyword id="KW-0106">Calcium</keyword>
<keyword id="KW-0175">Coiled coil</keyword>
<keyword id="KW-0176">Collagen</keyword>
<keyword id="KW-1015">Disulfide bond</keyword>
<keyword id="KW-0272">Extracellular matrix</keyword>
<keyword id="KW-0305">Gaseous exchange</keyword>
<keyword id="KW-0325">Glycoprotein</keyword>
<keyword id="KW-0379">Hydroxylation</keyword>
<keyword id="KW-0391">Immunity</keyword>
<keyword id="KW-0399">Innate immunity</keyword>
<keyword id="KW-0430">Lectin</keyword>
<keyword id="KW-1185">Reference proteome</keyword>
<keyword id="KW-0677">Repeat</keyword>
<keyword id="KW-0702">S-nitrosylation</keyword>
<keyword id="KW-0964">Secreted</keyword>
<keyword id="KW-0732">Signal</keyword>
<keyword id="KW-0767">Surface film</keyword>